<sequence>MPRVRRPAAPTGAATLLALMWLASPALPVGGFSYSEGLEPAVEAGLVSDEATAQAWLLDQLLLGLGRGELAVVAQAVAAWRRGDATRVRELNDWLLSTRESAELRLQTEQMGRSLGAWLQQRPGTDAAALARLLALPPAPSYPVAFALAAAGTPASLREVALAYAFGWAENMVQAAIKAVPLGQSAGQRMLGALVEAIPATVDAALVLRDGERMAFTPMLAVLSARHETQYSRLFRS</sequence>
<evidence type="ECO:0000255" key="1">
    <source>
        <dbReference type="HAMAP-Rule" id="MF_01385"/>
    </source>
</evidence>
<name>UREF_METPP</name>
<dbReference type="EMBL" id="CP000555">
    <property type="protein sequence ID" value="ABM93626.1"/>
    <property type="molecule type" value="Genomic_DNA"/>
</dbReference>
<dbReference type="RefSeq" id="WP_011828264.1">
    <property type="nucleotide sequence ID" value="NC_008825.1"/>
</dbReference>
<dbReference type="SMR" id="A2SDI7"/>
<dbReference type="STRING" id="420662.Mpe_A0664"/>
<dbReference type="KEGG" id="mpt:Mpe_A0664"/>
<dbReference type="eggNOG" id="COG0830">
    <property type="taxonomic scope" value="Bacteria"/>
</dbReference>
<dbReference type="HOGENOM" id="CLU_049215_2_1_4"/>
<dbReference type="Proteomes" id="UP000000366">
    <property type="component" value="Chromosome"/>
</dbReference>
<dbReference type="GO" id="GO:0005737">
    <property type="term" value="C:cytoplasm"/>
    <property type="evidence" value="ECO:0007669"/>
    <property type="project" value="UniProtKB-SubCell"/>
</dbReference>
<dbReference type="GO" id="GO:0016151">
    <property type="term" value="F:nickel cation binding"/>
    <property type="evidence" value="ECO:0007669"/>
    <property type="project" value="UniProtKB-UniRule"/>
</dbReference>
<dbReference type="Gene3D" id="1.10.4190.10">
    <property type="entry name" value="Urease accessory protein UreF"/>
    <property type="match status" value="1"/>
</dbReference>
<dbReference type="HAMAP" id="MF_01385">
    <property type="entry name" value="UreF"/>
    <property type="match status" value="1"/>
</dbReference>
<dbReference type="InterPro" id="IPR002639">
    <property type="entry name" value="UreF"/>
</dbReference>
<dbReference type="InterPro" id="IPR038277">
    <property type="entry name" value="UreF_sf"/>
</dbReference>
<dbReference type="PANTHER" id="PTHR33620">
    <property type="entry name" value="UREASE ACCESSORY PROTEIN F"/>
    <property type="match status" value="1"/>
</dbReference>
<dbReference type="PANTHER" id="PTHR33620:SF1">
    <property type="entry name" value="UREASE ACCESSORY PROTEIN F"/>
    <property type="match status" value="1"/>
</dbReference>
<dbReference type="Pfam" id="PF01730">
    <property type="entry name" value="UreF"/>
    <property type="match status" value="1"/>
</dbReference>
<dbReference type="PIRSF" id="PIRSF009467">
    <property type="entry name" value="Ureas_acces_UreF"/>
    <property type="match status" value="1"/>
</dbReference>
<proteinExistence type="inferred from homology"/>
<comment type="function">
    <text evidence="1">Required for maturation of urease via the functional incorporation of the urease nickel metallocenter.</text>
</comment>
<comment type="subunit">
    <text evidence="1">UreD, UreF and UreG form a complex that acts as a GTP-hydrolysis-dependent molecular chaperone, activating the urease apoprotein by helping to assemble the nickel containing metallocenter of UreC. The UreE protein probably delivers the nickel.</text>
</comment>
<comment type="subcellular location">
    <subcellularLocation>
        <location evidence="1">Cytoplasm</location>
    </subcellularLocation>
</comment>
<comment type="similarity">
    <text evidence="1">Belongs to the UreF family.</text>
</comment>
<organism>
    <name type="scientific">Methylibium petroleiphilum (strain ATCC BAA-1232 / LMG 22953 / PM1)</name>
    <dbReference type="NCBI Taxonomy" id="420662"/>
    <lineage>
        <taxon>Bacteria</taxon>
        <taxon>Pseudomonadati</taxon>
        <taxon>Pseudomonadota</taxon>
        <taxon>Betaproteobacteria</taxon>
        <taxon>Burkholderiales</taxon>
        <taxon>Sphaerotilaceae</taxon>
        <taxon>Methylibium</taxon>
    </lineage>
</organism>
<accession>A2SDI7</accession>
<feature type="chain" id="PRO_0000344132" description="Urease accessory protein UreF">
    <location>
        <begin position="1"/>
        <end position="237"/>
    </location>
</feature>
<protein>
    <recommendedName>
        <fullName evidence="1">Urease accessory protein UreF</fullName>
    </recommendedName>
</protein>
<gene>
    <name evidence="1" type="primary">ureF</name>
    <name type="ordered locus">Mpe_A0664</name>
</gene>
<keyword id="KW-0143">Chaperone</keyword>
<keyword id="KW-0963">Cytoplasm</keyword>
<keyword id="KW-0996">Nickel insertion</keyword>
<keyword id="KW-1185">Reference proteome</keyword>
<reference key="1">
    <citation type="journal article" date="2007" name="J. Bacteriol.">
        <title>Whole-genome analysis of the methyl tert-butyl ether-degrading beta-proteobacterium Methylibium petroleiphilum PM1.</title>
        <authorList>
            <person name="Kane S.R."/>
            <person name="Chakicherla A.Y."/>
            <person name="Chain P.S.G."/>
            <person name="Schmidt R."/>
            <person name="Shin M.W."/>
            <person name="Legler T.C."/>
            <person name="Scow K.M."/>
            <person name="Larimer F.W."/>
            <person name="Lucas S.M."/>
            <person name="Richardson P.M."/>
            <person name="Hristova K.R."/>
        </authorList>
    </citation>
    <scope>NUCLEOTIDE SEQUENCE [LARGE SCALE GENOMIC DNA]</scope>
    <source>
        <strain>ATCC BAA-1232 / LMG 22953 / PM1</strain>
    </source>
</reference>